<dbReference type="EMBL" id="CR860230">
    <property type="protein sequence ID" value="CAH92372.1"/>
    <property type="molecule type" value="mRNA"/>
</dbReference>
<dbReference type="RefSeq" id="NP_001126397.1">
    <property type="nucleotide sequence ID" value="NM_001132925.2"/>
</dbReference>
<dbReference type="SMR" id="Q5R788"/>
<dbReference type="FunCoup" id="Q5R788">
    <property type="interactions" value="1405"/>
</dbReference>
<dbReference type="STRING" id="9601.ENSPPYP00000006807"/>
<dbReference type="Ensembl" id="ENSPPYT00000007076.2">
    <property type="protein sequence ID" value="ENSPPYP00000006807.2"/>
    <property type="gene ID" value="ENSPPYG00000005988.2"/>
</dbReference>
<dbReference type="GeneID" id="100173379"/>
<dbReference type="KEGG" id="pon:100173379"/>
<dbReference type="CTD" id="122961"/>
<dbReference type="eggNOG" id="KOG1119">
    <property type="taxonomic scope" value="Eukaryota"/>
</dbReference>
<dbReference type="GeneTree" id="ENSGT00390000005700"/>
<dbReference type="HOGENOM" id="CLU_069054_1_4_1"/>
<dbReference type="InParanoid" id="Q5R788"/>
<dbReference type="OMA" id="SFQIHNP"/>
<dbReference type="OrthoDB" id="1938621at2759"/>
<dbReference type="Proteomes" id="UP000001595">
    <property type="component" value="Chromosome 14"/>
</dbReference>
<dbReference type="GO" id="GO:0120510">
    <property type="term" value="C:mitochondrial [4Fe-4S] assembly complex"/>
    <property type="evidence" value="ECO:0007669"/>
    <property type="project" value="Ensembl"/>
</dbReference>
<dbReference type="GO" id="GO:0051537">
    <property type="term" value="F:2 iron, 2 sulfur cluster binding"/>
    <property type="evidence" value="ECO:0007669"/>
    <property type="project" value="TreeGrafter"/>
</dbReference>
<dbReference type="GO" id="GO:0051539">
    <property type="term" value="F:4 iron, 4 sulfur cluster binding"/>
    <property type="evidence" value="ECO:0007669"/>
    <property type="project" value="TreeGrafter"/>
</dbReference>
<dbReference type="GO" id="GO:0042802">
    <property type="term" value="F:identical protein binding"/>
    <property type="evidence" value="ECO:0007669"/>
    <property type="project" value="Ensembl"/>
</dbReference>
<dbReference type="GO" id="GO:0005506">
    <property type="term" value="F:iron ion binding"/>
    <property type="evidence" value="ECO:0007669"/>
    <property type="project" value="TreeGrafter"/>
</dbReference>
<dbReference type="GO" id="GO:0016226">
    <property type="term" value="P:iron-sulfur cluster assembly"/>
    <property type="evidence" value="ECO:0007669"/>
    <property type="project" value="InterPro"/>
</dbReference>
<dbReference type="FunFam" id="2.60.300.12:FF:000006">
    <property type="entry name" value="Iron-sulfur cluster assembly 2 mitochondrial"/>
    <property type="match status" value="1"/>
</dbReference>
<dbReference type="Gene3D" id="2.60.300.12">
    <property type="entry name" value="HesB-like domain"/>
    <property type="match status" value="1"/>
</dbReference>
<dbReference type="InterPro" id="IPR000361">
    <property type="entry name" value="FeS_biogenesis"/>
</dbReference>
<dbReference type="InterPro" id="IPR016092">
    <property type="entry name" value="FeS_cluster_insertion"/>
</dbReference>
<dbReference type="InterPro" id="IPR017870">
    <property type="entry name" value="FeS_cluster_insertion_CS"/>
</dbReference>
<dbReference type="InterPro" id="IPR035903">
    <property type="entry name" value="HesB-like_dom_sf"/>
</dbReference>
<dbReference type="NCBIfam" id="TIGR00049">
    <property type="entry name" value="iron-sulfur cluster assembly accessory protein"/>
    <property type="match status" value="1"/>
</dbReference>
<dbReference type="PANTHER" id="PTHR43011">
    <property type="entry name" value="IRON-SULFUR CLUSTER ASSEMBLY 2 HOMOLOG, MITOCHONDRIAL"/>
    <property type="match status" value="1"/>
</dbReference>
<dbReference type="PANTHER" id="PTHR43011:SF1">
    <property type="entry name" value="IRON-SULFUR CLUSTER ASSEMBLY 2 HOMOLOG, MITOCHONDRIAL"/>
    <property type="match status" value="1"/>
</dbReference>
<dbReference type="Pfam" id="PF01521">
    <property type="entry name" value="Fe-S_biosyn"/>
    <property type="match status" value="1"/>
</dbReference>
<dbReference type="SUPFAM" id="SSF89360">
    <property type="entry name" value="HesB-like domain"/>
    <property type="match status" value="1"/>
</dbReference>
<dbReference type="PROSITE" id="PS01152">
    <property type="entry name" value="HESB"/>
    <property type="match status" value="1"/>
</dbReference>
<protein>
    <recommendedName>
        <fullName>Iron-sulfur cluster assembly 2 homolog, mitochondrial</fullName>
    </recommendedName>
    <alternativeName>
        <fullName>HESB-like domain-containing protein 1</fullName>
    </alternativeName>
</protein>
<organism>
    <name type="scientific">Pongo abelii</name>
    <name type="common">Sumatran orangutan</name>
    <name type="synonym">Pongo pygmaeus abelii</name>
    <dbReference type="NCBI Taxonomy" id="9601"/>
    <lineage>
        <taxon>Eukaryota</taxon>
        <taxon>Metazoa</taxon>
        <taxon>Chordata</taxon>
        <taxon>Craniata</taxon>
        <taxon>Vertebrata</taxon>
        <taxon>Euteleostomi</taxon>
        <taxon>Mammalia</taxon>
        <taxon>Eutheria</taxon>
        <taxon>Euarchontoglires</taxon>
        <taxon>Primates</taxon>
        <taxon>Haplorrhini</taxon>
        <taxon>Catarrhini</taxon>
        <taxon>Hominidae</taxon>
        <taxon>Pongo</taxon>
    </lineage>
</organism>
<feature type="transit peptide" description="Mitochondrion" evidence="3">
    <location>
        <begin position="1"/>
        <end position="8"/>
    </location>
</feature>
<feature type="chain" id="PRO_0000277590" description="Iron-sulfur cluster assembly 2 homolog, mitochondrial">
    <location>
        <begin position="9"/>
        <end position="154"/>
    </location>
</feature>
<feature type="binding site" evidence="1">
    <location>
        <position position="79"/>
    </location>
    <ligand>
        <name>Fe cation</name>
        <dbReference type="ChEBI" id="CHEBI:24875"/>
    </ligand>
</feature>
<feature type="binding site" evidence="1">
    <location>
        <position position="144"/>
    </location>
    <ligand>
        <name>Fe cation</name>
        <dbReference type="ChEBI" id="CHEBI:24875"/>
    </ligand>
</feature>
<feature type="binding site" evidence="1">
    <location>
        <position position="146"/>
    </location>
    <ligand>
        <name>Fe cation</name>
        <dbReference type="ChEBI" id="CHEBI:24875"/>
    </ligand>
</feature>
<accession>Q5R788</accession>
<comment type="function">
    <text evidence="2">Involved in the maturation of mitochondrial 4Fe-4S proteins functioning late in the iron-sulfur cluster assembly pathway. May be involved in the binding of an intermediate of Fe/S cluster assembly.</text>
</comment>
<comment type="subunit">
    <text evidence="2">Heterotetramer; forms a dimer of dimers with IBA57. Interacts with [2Fe-2S]-ISCA2 forming the heterodimer [2Fe- 2S]-ISCA2-IBA57 complex; [2Fe-2S] cluster binding is absolutely required to promote the complex formation.</text>
</comment>
<comment type="subcellular location">
    <subcellularLocation>
        <location evidence="2">Mitochondrion</location>
    </subcellularLocation>
</comment>
<comment type="similarity">
    <text evidence="4">Belongs to the HesB/IscA family.</text>
</comment>
<keyword id="KW-0408">Iron</keyword>
<keyword id="KW-0411">Iron-sulfur</keyword>
<keyword id="KW-0479">Metal-binding</keyword>
<keyword id="KW-0496">Mitochondrion</keyword>
<keyword id="KW-1185">Reference proteome</keyword>
<keyword id="KW-0809">Transit peptide</keyword>
<sequence length="154" mass="16414">MAAARGLSLTAATQKAVTPWPRGRLLAASLGPQARREASSSSPEAGEGQIRLTDSCVQRLLEITEGSEFLRLQVEGGGCSGFQYKFSLDTVINPDDRVFEQGGARVVVDSDSLAFVKGAQVDFSQELIRSSFQVLNNPQAQQGCSCGSSFSIKL</sequence>
<reference key="1">
    <citation type="submission" date="2004-11" db="EMBL/GenBank/DDBJ databases">
        <authorList>
            <consortium name="The German cDNA consortium"/>
        </authorList>
    </citation>
    <scope>NUCLEOTIDE SEQUENCE [LARGE SCALE MRNA]</scope>
    <source>
        <tissue>Kidney</tissue>
    </source>
</reference>
<proteinExistence type="evidence at transcript level"/>
<name>ISCA2_PONAB</name>
<evidence type="ECO:0000250" key="1">
    <source>
        <dbReference type="UniProtKB" id="P0AAC8"/>
    </source>
</evidence>
<evidence type="ECO:0000250" key="2">
    <source>
        <dbReference type="UniProtKB" id="Q86U28"/>
    </source>
</evidence>
<evidence type="ECO:0000255" key="3"/>
<evidence type="ECO:0000305" key="4"/>
<gene>
    <name type="primary">ISCA2</name>
    <name type="synonym">HBLD1</name>
</gene>